<dbReference type="EMBL" id="AM180355">
    <property type="protein sequence ID" value="CAJ66924.1"/>
    <property type="molecule type" value="Genomic_DNA"/>
</dbReference>
<dbReference type="RefSeq" id="WP_003421105.1">
    <property type="nucleotide sequence ID" value="NZ_JAUPES010000043.1"/>
</dbReference>
<dbReference type="RefSeq" id="YP_001086573.1">
    <property type="nucleotide sequence ID" value="NC_009089.1"/>
</dbReference>
<dbReference type="SMR" id="Q18CJ5"/>
<dbReference type="STRING" id="272563.CD630_01050"/>
<dbReference type="EnsemblBacteria" id="CAJ66924">
    <property type="protein sequence ID" value="CAJ66924"/>
    <property type="gene ID" value="CD630_01050"/>
</dbReference>
<dbReference type="GeneID" id="66352607"/>
<dbReference type="KEGG" id="cdf:CD630_01050"/>
<dbReference type="KEGG" id="pdc:CDIF630_00175"/>
<dbReference type="PATRIC" id="fig|272563.120.peg.115"/>
<dbReference type="eggNOG" id="COG0103">
    <property type="taxonomic scope" value="Bacteria"/>
</dbReference>
<dbReference type="OrthoDB" id="9803965at2"/>
<dbReference type="PhylomeDB" id="Q18CJ5"/>
<dbReference type="BioCyc" id="PDIF272563:G12WB-163-MONOMER"/>
<dbReference type="Proteomes" id="UP000001978">
    <property type="component" value="Chromosome"/>
</dbReference>
<dbReference type="GO" id="GO:0022627">
    <property type="term" value="C:cytosolic small ribosomal subunit"/>
    <property type="evidence" value="ECO:0007669"/>
    <property type="project" value="TreeGrafter"/>
</dbReference>
<dbReference type="GO" id="GO:0003723">
    <property type="term" value="F:RNA binding"/>
    <property type="evidence" value="ECO:0007669"/>
    <property type="project" value="TreeGrafter"/>
</dbReference>
<dbReference type="GO" id="GO:0003735">
    <property type="term" value="F:structural constituent of ribosome"/>
    <property type="evidence" value="ECO:0007669"/>
    <property type="project" value="InterPro"/>
</dbReference>
<dbReference type="GO" id="GO:0006412">
    <property type="term" value="P:translation"/>
    <property type="evidence" value="ECO:0007669"/>
    <property type="project" value="UniProtKB-UniRule"/>
</dbReference>
<dbReference type="FunFam" id="3.30.230.10:FF:000001">
    <property type="entry name" value="30S ribosomal protein S9"/>
    <property type="match status" value="1"/>
</dbReference>
<dbReference type="Gene3D" id="3.30.230.10">
    <property type="match status" value="1"/>
</dbReference>
<dbReference type="HAMAP" id="MF_00532_B">
    <property type="entry name" value="Ribosomal_uS9_B"/>
    <property type="match status" value="1"/>
</dbReference>
<dbReference type="InterPro" id="IPR020568">
    <property type="entry name" value="Ribosomal_Su5_D2-typ_SF"/>
</dbReference>
<dbReference type="InterPro" id="IPR000754">
    <property type="entry name" value="Ribosomal_uS9"/>
</dbReference>
<dbReference type="InterPro" id="IPR023035">
    <property type="entry name" value="Ribosomal_uS9_bac/plastid"/>
</dbReference>
<dbReference type="InterPro" id="IPR020574">
    <property type="entry name" value="Ribosomal_uS9_CS"/>
</dbReference>
<dbReference type="InterPro" id="IPR014721">
    <property type="entry name" value="Ribsml_uS5_D2-typ_fold_subgr"/>
</dbReference>
<dbReference type="NCBIfam" id="NF001099">
    <property type="entry name" value="PRK00132.1"/>
    <property type="match status" value="1"/>
</dbReference>
<dbReference type="PANTHER" id="PTHR21569">
    <property type="entry name" value="RIBOSOMAL PROTEIN S9"/>
    <property type="match status" value="1"/>
</dbReference>
<dbReference type="PANTHER" id="PTHR21569:SF1">
    <property type="entry name" value="SMALL RIBOSOMAL SUBUNIT PROTEIN US9M"/>
    <property type="match status" value="1"/>
</dbReference>
<dbReference type="Pfam" id="PF00380">
    <property type="entry name" value="Ribosomal_S9"/>
    <property type="match status" value="1"/>
</dbReference>
<dbReference type="SUPFAM" id="SSF54211">
    <property type="entry name" value="Ribosomal protein S5 domain 2-like"/>
    <property type="match status" value="1"/>
</dbReference>
<dbReference type="PROSITE" id="PS00360">
    <property type="entry name" value="RIBOSOMAL_S9"/>
    <property type="match status" value="1"/>
</dbReference>
<evidence type="ECO:0000255" key="1">
    <source>
        <dbReference type="HAMAP-Rule" id="MF_00532"/>
    </source>
</evidence>
<evidence type="ECO:0000305" key="2"/>
<name>RS9_CLOD6</name>
<accession>Q18CJ5</accession>
<proteinExistence type="inferred from homology"/>
<protein>
    <recommendedName>
        <fullName evidence="1">Small ribosomal subunit protein uS9</fullName>
    </recommendedName>
    <alternativeName>
        <fullName evidence="2">30S ribosomal protein S9</fullName>
    </alternativeName>
</protein>
<gene>
    <name evidence="1" type="primary">rpsI</name>
    <name type="ordered locus">CD630_01050</name>
</gene>
<reference key="1">
    <citation type="journal article" date="2006" name="Nat. Genet.">
        <title>The multidrug-resistant human pathogen Clostridium difficile has a highly mobile, mosaic genome.</title>
        <authorList>
            <person name="Sebaihia M."/>
            <person name="Wren B.W."/>
            <person name="Mullany P."/>
            <person name="Fairweather N.F."/>
            <person name="Minton N."/>
            <person name="Stabler R."/>
            <person name="Thomson N.R."/>
            <person name="Roberts A.P."/>
            <person name="Cerdeno-Tarraga A.M."/>
            <person name="Wang H."/>
            <person name="Holden M.T.G."/>
            <person name="Wright A."/>
            <person name="Churcher C."/>
            <person name="Quail M.A."/>
            <person name="Baker S."/>
            <person name="Bason N."/>
            <person name="Brooks K."/>
            <person name="Chillingworth T."/>
            <person name="Cronin A."/>
            <person name="Davis P."/>
            <person name="Dowd L."/>
            <person name="Fraser A."/>
            <person name="Feltwell T."/>
            <person name="Hance Z."/>
            <person name="Holroyd S."/>
            <person name="Jagels K."/>
            <person name="Moule S."/>
            <person name="Mungall K."/>
            <person name="Price C."/>
            <person name="Rabbinowitsch E."/>
            <person name="Sharp S."/>
            <person name="Simmonds M."/>
            <person name="Stevens K."/>
            <person name="Unwin L."/>
            <person name="Whithead S."/>
            <person name="Dupuy B."/>
            <person name="Dougan G."/>
            <person name="Barrell B."/>
            <person name="Parkhill J."/>
        </authorList>
    </citation>
    <scope>NUCLEOTIDE SEQUENCE [LARGE SCALE GENOMIC DNA]</scope>
    <source>
        <strain>630</strain>
    </source>
</reference>
<feature type="chain" id="PRO_1000051207" description="Small ribosomal subunit protein uS9">
    <location>
        <begin position="1"/>
        <end position="130"/>
    </location>
</feature>
<sequence>MANVQYYGTGRRKSSVARVRLVAGEGNILVNGRALENYFNYETLIRDVKQPLVLTGNENKYDVIVKVEGGGFTGQAGAIRHGISRALLKADLDLRPALKKEGFLTRDARMKERKKYGLKAARRAPQFSKR</sequence>
<keyword id="KW-1185">Reference proteome</keyword>
<keyword id="KW-0687">Ribonucleoprotein</keyword>
<keyword id="KW-0689">Ribosomal protein</keyword>
<comment type="similarity">
    <text evidence="1">Belongs to the universal ribosomal protein uS9 family.</text>
</comment>
<organism>
    <name type="scientific">Clostridioides difficile (strain 630)</name>
    <name type="common">Peptoclostridium difficile</name>
    <dbReference type="NCBI Taxonomy" id="272563"/>
    <lineage>
        <taxon>Bacteria</taxon>
        <taxon>Bacillati</taxon>
        <taxon>Bacillota</taxon>
        <taxon>Clostridia</taxon>
        <taxon>Peptostreptococcales</taxon>
        <taxon>Peptostreptococcaceae</taxon>
        <taxon>Clostridioides</taxon>
    </lineage>
</organism>